<protein>
    <recommendedName>
        <fullName evidence="1">ATP synthase gamma chain</fullName>
    </recommendedName>
    <alternativeName>
        <fullName evidence="1">ATP synthase F1 sector gamma subunit</fullName>
    </alternativeName>
    <alternativeName>
        <fullName evidence="1">F-ATPase gamma subunit</fullName>
    </alternativeName>
</protein>
<reference key="1">
    <citation type="journal article" date="2007" name="PLoS ONE">
        <title>Genome sequencing shows that European isolates of Francisella tularensis subspecies tularensis are almost identical to US laboratory strain Schu S4.</title>
        <authorList>
            <person name="Chaudhuri R.R."/>
            <person name="Ren C.-P."/>
            <person name="Desmond L."/>
            <person name="Vincent G.A."/>
            <person name="Silman N.J."/>
            <person name="Brehm J.K."/>
            <person name="Elmore M.J."/>
            <person name="Hudson M.J."/>
            <person name="Forsman M."/>
            <person name="Isherwood K.E."/>
            <person name="Gurycova D."/>
            <person name="Minton N.P."/>
            <person name="Titball R.W."/>
            <person name="Pallen M.J."/>
            <person name="Vipond R."/>
        </authorList>
    </citation>
    <scope>NUCLEOTIDE SEQUENCE [LARGE SCALE GENOMIC DNA]</scope>
    <source>
        <strain>FSC 198</strain>
    </source>
</reference>
<evidence type="ECO:0000255" key="1">
    <source>
        <dbReference type="HAMAP-Rule" id="MF_00815"/>
    </source>
</evidence>
<dbReference type="EMBL" id="AM286280">
    <property type="protein sequence ID" value="CAL08079.1"/>
    <property type="molecule type" value="Genomic_DNA"/>
</dbReference>
<dbReference type="RefSeq" id="WP_003019765.1">
    <property type="nucleotide sequence ID" value="NC_008245.1"/>
</dbReference>
<dbReference type="SMR" id="Q14K07"/>
<dbReference type="KEGG" id="ftf:FTF0063"/>
<dbReference type="HOGENOM" id="CLU_050669_0_1_6"/>
<dbReference type="GO" id="GO:0005886">
    <property type="term" value="C:plasma membrane"/>
    <property type="evidence" value="ECO:0007669"/>
    <property type="project" value="UniProtKB-SubCell"/>
</dbReference>
<dbReference type="GO" id="GO:0045259">
    <property type="term" value="C:proton-transporting ATP synthase complex"/>
    <property type="evidence" value="ECO:0007669"/>
    <property type="project" value="UniProtKB-KW"/>
</dbReference>
<dbReference type="GO" id="GO:0005524">
    <property type="term" value="F:ATP binding"/>
    <property type="evidence" value="ECO:0007669"/>
    <property type="project" value="UniProtKB-UniRule"/>
</dbReference>
<dbReference type="GO" id="GO:0046933">
    <property type="term" value="F:proton-transporting ATP synthase activity, rotational mechanism"/>
    <property type="evidence" value="ECO:0007669"/>
    <property type="project" value="UniProtKB-UniRule"/>
</dbReference>
<dbReference type="GO" id="GO:0042777">
    <property type="term" value="P:proton motive force-driven plasma membrane ATP synthesis"/>
    <property type="evidence" value="ECO:0007669"/>
    <property type="project" value="UniProtKB-UniRule"/>
</dbReference>
<dbReference type="CDD" id="cd12151">
    <property type="entry name" value="F1-ATPase_gamma"/>
    <property type="match status" value="1"/>
</dbReference>
<dbReference type="Gene3D" id="3.40.1380.10">
    <property type="match status" value="1"/>
</dbReference>
<dbReference type="Gene3D" id="1.10.287.80">
    <property type="entry name" value="ATP synthase, gamma subunit, helix hairpin domain"/>
    <property type="match status" value="1"/>
</dbReference>
<dbReference type="HAMAP" id="MF_00815">
    <property type="entry name" value="ATP_synth_gamma_bact"/>
    <property type="match status" value="1"/>
</dbReference>
<dbReference type="InterPro" id="IPR035968">
    <property type="entry name" value="ATP_synth_F1_ATPase_gsu"/>
</dbReference>
<dbReference type="InterPro" id="IPR000131">
    <property type="entry name" value="ATP_synth_F1_gsu"/>
</dbReference>
<dbReference type="InterPro" id="IPR023632">
    <property type="entry name" value="ATP_synth_F1_gsu_CS"/>
</dbReference>
<dbReference type="NCBIfam" id="TIGR01146">
    <property type="entry name" value="ATPsyn_F1gamma"/>
    <property type="match status" value="1"/>
</dbReference>
<dbReference type="NCBIfam" id="NF009956">
    <property type="entry name" value="PRK13422.1"/>
    <property type="match status" value="1"/>
</dbReference>
<dbReference type="PANTHER" id="PTHR11693">
    <property type="entry name" value="ATP SYNTHASE GAMMA CHAIN"/>
    <property type="match status" value="1"/>
</dbReference>
<dbReference type="PANTHER" id="PTHR11693:SF22">
    <property type="entry name" value="ATP SYNTHASE SUBUNIT GAMMA, MITOCHONDRIAL"/>
    <property type="match status" value="1"/>
</dbReference>
<dbReference type="Pfam" id="PF00231">
    <property type="entry name" value="ATP-synt"/>
    <property type="match status" value="1"/>
</dbReference>
<dbReference type="PRINTS" id="PR00126">
    <property type="entry name" value="ATPASEGAMMA"/>
</dbReference>
<dbReference type="SUPFAM" id="SSF52943">
    <property type="entry name" value="ATP synthase (F1-ATPase), gamma subunit"/>
    <property type="match status" value="1"/>
</dbReference>
<dbReference type="PROSITE" id="PS00153">
    <property type="entry name" value="ATPASE_GAMMA"/>
    <property type="match status" value="1"/>
</dbReference>
<organism>
    <name type="scientific">Francisella tularensis subsp. tularensis (strain FSC 198)</name>
    <dbReference type="NCBI Taxonomy" id="393115"/>
    <lineage>
        <taxon>Bacteria</taxon>
        <taxon>Pseudomonadati</taxon>
        <taxon>Pseudomonadota</taxon>
        <taxon>Gammaproteobacteria</taxon>
        <taxon>Thiotrichales</taxon>
        <taxon>Francisellaceae</taxon>
        <taxon>Francisella</taxon>
    </lineage>
</organism>
<name>ATPG_FRAT1</name>
<comment type="function">
    <text evidence="1">Produces ATP from ADP in the presence of a proton gradient across the membrane. The gamma chain is believed to be important in regulating ATPase activity and the flow of protons through the CF(0) complex.</text>
</comment>
<comment type="subunit">
    <text evidence="1">F-type ATPases have 2 components, CF(1) - the catalytic core - and CF(0) - the membrane proton channel. CF(1) has five subunits: alpha(3), beta(3), gamma(1), delta(1), epsilon(1). CF(0) has three main subunits: a, b and c.</text>
</comment>
<comment type="subcellular location">
    <subcellularLocation>
        <location evidence="1">Cell inner membrane</location>
        <topology evidence="1">Peripheral membrane protein</topology>
    </subcellularLocation>
</comment>
<comment type="similarity">
    <text evidence="1">Belongs to the ATPase gamma chain family.</text>
</comment>
<sequence>MSNAREIRSKVQSVKNTQKITGAMELVAASKMRGAIVKMNNVRPYVESANTIIKNVTAASIDYPNPYLFDRDVKRVGYIVISTDRGLCGGLNINLFKHVLKEIKNNIEDRVGVDVCVIGSKAENFFAKLKDVNIVATAHYNDKDKEGSIRAIGGAVKVMLDKFTAGEIDRLYMSSNQFVSTIKQRPRLQTLLPIQDIFSAEEIKANKEKATKGHWDYIYERDIEEVLNALFIRYIEAQVRGAILENAACEQAARMMAMKNATDNASDIIDQLKLDYNKVRQAMITQELAEICSGAAAV</sequence>
<keyword id="KW-0066">ATP synthesis</keyword>
<keyword id="KW-0997">Cell inner membrane</keyword>
<keyword id="KW-1003">Cell membrane</keyword>
<keyword id="KW-0139">CF(1)</keyword>
<keyword id="KW-0375">Hydrogen ion transport</keyword>
<keyword id="KW-0406">Ion transport</keyword>
<keyword id="KW-0472">Membrane</keyword>
<keyword id="KW-0813">Transport</keyword>
<gene>
    <name evidence="1" type="primary">atpG</name>
    <name type="ordered locus">FTF0063</name>
</gene>
<accession>Q14K07</accession>
<feature type="chain" id="PRO_1000053213" description="ATP synthase gamma chain">
    <location>
        <begin position="1"/>
        <end position="298"/>
    </location>
</feature>
<proteinExistence type="inferred from homology"/>